<accession>P02012</accession>
<accession>Q6GP50</accession>
<gene>
    <name type="primary">hba1</name>
</gene>
<comment type="function">
    <text>Involved in oxygen transport from the lung to the various peripheral tissues.</text>
</comment>
<comment type="subunit">
    <text>Heterotetramer of two alpha chains and two beta chains.</text>
</comment>
<comment type="tissue specificity">
    <text>Red blood cells.</text>
</comment>
<comment type="similarity">
    <text evidence="1">Belongs to the globin family.</text>
</comment>
<keyword id="KW-0349">Heme</keyword>
<keyword id="KW-0408">Iron</keyword>
<keyword id="KW-0479">Metal-binding</keyword>
<keyword id="KW-0561">Oxygen transport</keyword>
<keyword id="KW-1185">Reference proteome</keyword>
<keyword id="KW-0813">Transport</keyword>
<feature type="initiator methionine" description="Removed">
    <location>
        <position position="1"/>
    </location>
</feature>
<feature type="chain" id="PRO_0000052807" description="Hemoglobin subunit alpha-1">
    <location>
        <begin position="2"/>
        <end position="142"/>
    </location>
</feature>
<feature type="domain" description="Globin" evidence="1">
    <location>
        <begin position="2"/>
        <end position="142"/>
    </location>
</feature>
<feature type="binding site" evidence="1">
    <location>
        <position position="59"/>
    </location>
    <ligand>
        <name>O2</name>
        <dbReference type="ChEBI" id="CHEBI:15379"/>
    </ligand>
</feature>
<feature type="binding site" description="proximal binding residue" evidence="1">
    <location>
        <position position="88"/>
    </location>
    <ligand>
        <name>heme b</name>
        <dbReference type="ChEBI" id="CHEBI:60344"/>
    </ligand>
    <ligandPart>
        <name>Fe</name>
        <dbReference type="ChEBI" id="CHEBI:18248"/>
    </ligandPart>
</feature>
<feature type="sequence conflict" description="In Ref. 4." evidence="2" ref="4">
    <original>A</original>
    <variation>S</variation>
    <location>
        <position position="29"/>
    </location>
</feature>
<feature type="sequence conflict" description="In Ref. 4." evidence="2" ref="4">
    <original>S</original>
    <variation>N</variation>
    <location>
        <position position="46"/>
    </location>
</feature>
<feature type="sequence conflict" description="In Ref. 5; AAA49662." evidence="2" ref="5">
    <original>EAS</original>
    <variation>KLH</variation>
    <location>
        <begin position="69"/>
        <end position="71"/>
    </location>
</feature>
<feature type="sequence conflict" description="In Ref. 5; AAA49662." evidence="2" ref="5">
    <original>G</original>
    <variation>S</variation>
    <location>
        <position position="97"/>
    </location>
</feature>
<feature type="sequence conflict" description="In Ref. 5; AAA49662." evidence="2" ref="5">
    <original>F</original>
    <variation>L</variation>
    <location>
        <position position="114"/>
    </location>
</feature>
<dbReference type="EMBL" id="J00972">
    <property type="status" value="NOT_ANNOTATED_CDS"/>
    <property type="molecule type" value="mRNA"/>
</dbReference>
<dbReference type="EMBL" id="X14259">
    <property type="protein sequence ID" value="CAA32472.1"/>
    <property type="molecule type" value="Genomic_DNA"/>
</dbReference>
<dbReference type="EMBL" id="BC073294">
    <property type="protein sequence ID" value="AAH73294.1"/>
    <property type="molecule type" value="mRNA"/>
</dbReference>
<dbReference type="EMBL" id="J00973">
    <property type="status" value="NOT_ANNOTATED_CDS"/>
    <property type="molecule type" value="Genomic_DNA"/>
</dbReference>
<dbReference type="EMBL" id="J00974">
    <property type="status" value="NOT_ANNOTATED_CDS"/>
    <property type="molecule type" value="Genomic_DNA"/>
</dbReference>
<dbReference type="EMBL" id="M15381">
    <property type="protein sequence ID" value="AAA49662.1"/>
    <property type="molecule type" value="Genomic_DNA"/>
</dbReference>
<dbReference type="EMBL" id="M10577">
    <property type="protein sequence ID" value="AAA49732.1"/>
    <property type="molecule type" value="mRNA"/>
</dbReference>
<dbReference type="PIR" id="A93456">
    <property type="entry name" value="HAXL1"/>
</dbReference>
<dbReference type="SMR" id="P02012"/>
<dbReference type="GeneID" id="108702027"/>
<dbReference type="KEGG" id="xla:108702027"/>
<dbReference type="AGR" id="Xenbase:XB-GENE-17345270"/>
<dbReference type="CTD" id="108702027"/>
<dbReference type="Xenbase" id="XB-GENE-17345270">
    <property type="gene designation" value="hba1.L"/>
</dbReference>
<dbReference type="OMA" id="VIAIMYP"/>
<dbReference type="OrthoDB" id="8751793at2759"/>
<dbReference type="CD-CODE" id="78E86D56">
    <property type="entry name" value="Mitochondrial cloud"/>
</dbReference>
<dbReference type="Proteomes" id="UP000186698">
    <property type="component" value="Chromosome 9_10L"/>
</dbReference>
<dbReference type="Bgee" id="108702027">
    <property type="expression patterns" value="Expressed in lung and 19 other cell types or tissues"/>
</dbReference>
<dbReference type="GO" id="GO:0072562">
    <property type="term" value="C:blood microparticle"/>
    <property type="evidence" value="ECO:0007669"/>
    <property type="project" value="TreeGrafter"/>
</dbReference>
<dbReference type="GO" id="GO:0031838">
    <property type="term" value="C:haptoglobin-hemoglobin complex"/>
    <property type="evidence" value="ECO:0000318"/>
    <property type="project" value="GO_Central"/>
</dbReference>
<dbReference type="GO" id="GO:0005833">
    <property type="term" value="C:hemoglobin complex"/>
    <property type="evidence" value="ECO:0000318"/>
    <property type="project" value="GO_Central"/>
</dbReference>
<dbReference type="GO" id="GO:0031720">
    <property type="term" value="F:haptoglobin binding"/>
    <property type="evidence" value="ECO:0007669"/>
    <property type="project" value="TreeGrafter"/>
</dbReference>
<dbReference type="GO" id="GO:0020037">
    <property type="term" value="F:heme binding"/>
    <property type="evidence" value="ECO:0000318"/>
    <property type="project" value="GO_Central"/>
</dbReference>
<dbReference type="GO" id="GO:0046872">
    <property type="term" value="F:metal ion binding"/>
    <property type="evidence" value="ECO:0007669"/>
    <property type="project" value="UniProtKB-KW"/>
</dbReference>
<dbReference type="GO" id="GO:0043177">
    <property type="term" value="F:organic acid binding"/>
    <property type="evidence" value="ECO:0007669"/>
    <property type="project" value="TreeGrafter"/>
</dbReference>
<dbReference type="GO" id="GO:0019825">
    <property type="term" value="F:oxygen binding"/>
    <property type="evidence" value="ECO:0000318"/>
    <property type="project" value="GO_Central"/>
</dbReference>
<dbReference type="GO" id="GO:0005344">
    <property type="term" value="F:oxygen carrier activity"/>
    <property type="evidence" value="ECO:0000318"/>
    <property type="project" value="GO_Central"/>
</dbReference>
<dbReference type="GO" id="GO:0004601">
    <property type="term" value="F:peroxidase activity"/>
    <property type="evidence" value="ECO:0007669"/>
    <property type="project" value="TreeGrafter"/>
</dbReference>
<dbReference type="GO" id="GO:0042744">
    <property type="term" value="P:hydrogen peroxide catabolic process"/>
    <property type="evidence" value="ECO:0000318"/>
    <property type="project" value="GO_Central"/>
</dbReference>
<dbReference type="CDD" id="cd08927">
    <property type="entry name" value="Hb-alpha-like"/>
    <property type="match status" value="1"/>
</dbReference>
<dbReference type="FunFam" id="1.10.490.10:FF:000002">
    <property type="entry name" value="Hemoglobin subunit alpha"/>
    <property type="match status" value="1"/>
</dbReference>
<dbReference type="Gene3D" id="1.10.490.10">
    <property type="entry name" value="Globins"/>
    <property type="match status" value="1"/>
</dbReference>
<dbReference type="InterPro" id="IPR000971">
    <property type="entry name" value="Globin"/>
</dbReference>
<dbReference type="InterPro" id="IPR009050">
    <property type="entry name" value="Globin-like_sf"/>
</dbReference>
<dbReference type="InterPro" id="IPR012292">
    <property type="entry name" value="Globin/Proto"/>
</dbReference>
<dbReference type="InterPro" id="IPR002338">
    <property type="entry name" value="Hemoglobin_a-typ"/>
</dbReference>
<dbReference type="InterPro" id="IPR050056">
    <property type="entry name" value="Hemoglobin_oxygen_transport"/>
</dbReference>
<dbReference type="PANTHER" id="PTHR11442">
    <property type="entry name" value="HEMOGLOBIN FAMILY MEMBER"/>
    <property type="match status" value="1"/>
</dbReference>
<dbReference type="PANTHER" id="PTHR11442:SF48">
    <property type="entry name" value="HEMOGLOBIN SUBUNIT ALPHA"/>
    <property type="match status" value="1"/>
</dbReference>
<dbReference type="Pfam" id="PF00042">
    <property type="entry name" value="Globin"/>
    <property type="match status" value="1"/>
</dbReference>
<dbReference type="PRINTS" id="PR00612">
    <property type="entry name" value="ALPHAHAEM"/>
</dbReference>
<dbReference type="SUPFAM" id="SSF46458">
    <property type="entry name" value="Globin-like"/>
    <property type="match status" value="1"/>
</dbReference>
<dbReference type="PROSITE" id="PS01033">
    <property type="entry name" value="GLOBIN"/>
    <property type="match status" value="1"/>
</dbReference>
<name>HBA1_XENLA</name>
<reference key="1">
    <citation type="journal article" date="1983" name="Nucleic Acids Res.">
        <title>Complete nucleotide sequence of a cloned cDNA derived from the major adult alpha-globin mRNA of X. laevis.</title>
        <authorList>
            <person name="Kay R.M."/>
            <person name="Harris R."/>
            <person name="Patient R.K."/>
            <person name="Williams J.G."/>
        </authorList>
    </citation>
    <scope>NUCLEOTIDE SEQUENCE [MRNA]</scope>
</reference>
<reference key="2">
    <citation type="journal article" date="1988" name="J. Mol. Evol.">
        <title>Primary structure and evolutionary relationship between the adult alpha-globin genes and their 5'-flanking regions of Xenopus laevis and Xenopus tropicalis.</title>
        <authorList>
            <person name="Stalder J."/>
            <person name="Wirthmueller U."/>
            <person name="Beck J."/>
            <person name="Gruber A."/>
            <person name="Meyerhof W."/>
            <person name="Knoechel W."/>
            <person name="Weber R."/>
        </authorList>
    </citation>
    <scope>NUCLEOTIDE SEQUENCE [GENOMIC DNA]</scope>
</reference>
<reference key="3">
    <citation type="submission" date="2004-06" db="EMBL/GenBank/DDBJ databases">
        <authorList>
            <consortium name="NIH - Xenopus Gene Collection (XGC) project"/>
        </authorList>
    </citation>
    <scope>NUCLEOTIDE SEQUENCE [LARGE SCALE MRNA]</scope>
    <source>
        <tissue>Spleen</tissue>
    </source>
</reference>
<reference key="4">
    <citation type="journal article" date="1981" name="J. Mol. Biol.">
        <title>Isolation of a Xenopus laevis alpha-globin gene.</title>
        <authorList>
            <person name="Partington G.A."/>
            <person name="Baralle F.E."/>
        </authorList>
    </citation>
    <scope>NUCLEOTIDE SEQUENCE [GENOMIC DNA] OF 29-100 AND 127-142</scope>
</reference>
<reference key="5">
    <citation type="journal article" date="1980" name="Dev. Biol.">
        <title>Partial sequence analysis of Xenopus alpha- and beta-globin mRNA as determined from recombinant DNA plasmids.</title>
        <authorList>
            <person name="Richardson C."/>
            <person name="Cappello J."/>
            <person name="Cochran M.D."/>
            <person name="Armentrout R.W."/>
            <person name="Brown R.D."/>
        </authorList>
    </citation>
    <scope>NUCLEOTIDE SEQUENCE [GENOMIC DNA] OF 69-142</scope>
</reference>
<reference key="6">
    <citation type="journal article" date="1980" name="Nucleic Acids Res.">
        <title>Molecular cloning of cDNA sequences coding for the major alpha- and beta-globin polypeptides of adult Xenopus laevis.</title>
        <authorList>
            <person name="Kay R.M."/>
            <person name="Harris R."/>
            <person name="Patient R.K."/>
            <person name="Williams J.G."/>
        </authorList>
    </citation>
    <scope>NUCLEOTIDE SEQUENCE [MRNA] OF 129-142</scope>
</reference>
<proteinExistence type="evidence at transcript level"/>
<organism>
    <name type="scientific">Xenopus laevis</name>
    <name type="common">African clawed frog</name>
    <dbReference type="NCBI Taxonomy" id="8355"/>
    <lineage>
        <taxon>Eukaryota</taxon>
        <taxon>Metazoa</taxon>
        <taxon>Chordata</taxon>
        <taxon>Craniata</taxon>
        <taxon>Vertebrata</taxon>
        <taxon>Euteleostomi</taxon>
        <taxon>Amphibia</taxon>
        <taxon>Batrachia</taxon>
        <taxon>Anura</taxon>
        <taxon>Pipoidea</taxon>
        <taxon>Pipidae</taxon>
        <taxon>Xenopodinae</taxon>
        <taxon>Xenopus</taxon>
        <taxon>Xenopus</taxon>
    </lineage>
</organism>
<protein>
    <recommendedName>
        <fullName>Hemoglobin subunit alpha-1</fullName>
    </recommendedName>
    <alternativeName>
        <fullName>Alpha-1-globin</fullName>
    </alternativeName>
    <alternativeName>
        <fullName>Hemoglobin alpha-1 chain</fullName>
    </alternativeName>
    <alternativeName>
        <fullName>Hemoglobin alpha-major chain</fullName>
    </alternativeName>
</protein>
<evidence type="ECO:0000255" key="1">
    <source>
        <dbReference type="PROSITE-ProRule" id="PRU00238"/>
    </source>
</evidence>
<evidence type="ECO:0000305" key="2"/>
<sequence>MLLSADDKKHIKAIMPAIAAHGDKFGGEALYRMFIVNPKTKTYFPSFDFHHNSKQISAHGKKVVDALNEASNHLDNIAGSMSKLSDLHAYDLRVDPGNFPLLAHNILVVVAMNFPKQFDPATHKALDKFLATVSTVLTSKYR</sequence>